<feature type="chain" id="PRO_0000334285" description="Na(+)/H(+) antiporter NhaA">
    <location>
        <begin position="1"/>
        <end position="388"/>
    </location>
</feature>
<feature type="topological domain" description="Cytoplasmic" evidence="1">
    <location>
        <begin position="1"/>
        <end position="11"/>
    </location>
</feature>
<feature type="transmembrane region" description="Helical; Name=1" evidence="1">
    <location>
        <begin position="12"/>
        <end position="31"/>
    </location>
</feature>
<feature type="topological domain" description="Periplasmic" evidence="1">
    <location>
        <begin position="32"/>
        <end position="58"/>
    </location>
</feature>
<feature type="transmembrane region" description="Helical; Name=2" evidence="1">
    <location>
        <begin position="59"/>
        <end position="80"/>
    </location>
</feature>
<feature type="topological domain" description="Cytoplasmic" evidence="1">
    <location>
        <begin position="81"/>
        <end position="96"/>
    </location>
</feature>
<feature type="transmembrane region" description="Helical; Name=3" evidence="1">
    <location>
        <begin position="97"/>
        <end position="116"/>
    </location>
</feature>
<feature type="topological domain" description="Periplasmic" evidence="1">
    <location>
        <begin position="117"/>
        <end position="122"/>
    </location>
</feature>
<feature type="transmembrane region" description="Helical; Name=4" evidence="1">
    <location>
        <begin position="123"/>
        <end position="130"/>
    </location>
</feature>
<feature type="topological domain" description="Cytoplasmic" evidence="1">
    <location>
        <begin position="131"/>
        <end position="154"/>
    </location>
</feature>
<feature type="transmembrane region" description="Helical; Name=5" evidence="1">
    <location>
        <begin position="155"/>
        <end position="176"/>
    </location>
</feature>
<feature type="topological domain" description="Periplasmic" evidence="1">
    <location>
        <begin position="177"/>
        <end position="180"/>
    </location>
</feature>
<feature type="transmembrane region" description="Helical; Name=6" evidence="1">
    <location>
        <begin position="181"/>
        <end position="200"/>
    </location>
</feature>
<feature type="topological domain" description="Cytoplasmic" evidence="1">
    <location>
        <begin position="201"/>
        <end position="204"/>
    </location>
</feature>
<feature type="transmembrane region" description="Helical; Name=7" evidence="1">
    <location>
        <begin position="205"/>
        <end position="222"/>
    </location>
</feature>
<feature type="topological domain" description="Periplasmic" evidence="1">
    <location>
        <position position="223"/>
    </location>
</feature>
<feature type="transmembrane region" description="Helical; Name=8" evidence="1">
    <location>
        <begin position="224"/>
        <end position="236"/>
    </location>
</feature>
<feature type="topological domain" description="Cytoplasmic" evidence="1">
    <location>
        <begin position="237"/>
        <end position="253"/>
    </location>
</feature>
<feature type="transmembrane region" description="Helical; Name=9" evidence="1">
    <location>
        <begin position="254"/>
        <end position="272"/>
    </location>
</feature>
<feature type="topological domain" description="Periplasmic" evidence="1">
    <location>
        <begin position="273"/>
        <end position="286"/>
    </location>
</feature>
<feature type="transmembrane region" description="Helical; Name=10" evidence="1">
    <location>
        <begin position="287"/>
        <end position="310"/>
    </location>
</feature>
<feature type="topological domain" description="Cytoplasmic" evidence="1">
    <location>
        <begin position="311"/>
        <end position="339"/>
    </location>
</feature>
<feature type="transmembrane region" description="Helical; Name=11" evidence="1">
    <location>
        <begin position="340"/>
        <end position="350"/>
    </location>
</feature>
<feature type="topological domain" description="Periplasmic" evidence="1">
    <location>
        <begin position="351"/>
        <end position="357"/>
    </location>
</feature>
<feature type="transmembrane region" description="Helical; Name=12" evidence="1">
    <location>
        <begin position="358"/>
        <end position="380"/>
    </location>
</feature>
<feature type="topological domain" description="Cytoplasmic" evidence="1">
    <location>
        <begin position="381"/>
        <end position="388"/>
    </location>
</feature>
<organism>
    <name type="scientific">Escherichia coli O139:H28 (strain E24377A / ETEC)</name>
    <dbReference type="NCBI Taxonomy" id="331111"/>
    <lineage>
        <taxon>Bacteria</taxon>
        <taxon>Pseudomonadati</taxon>
        <taxon>Pseudomonadota</taxon>
        <taxon>Gammaproteobacteria</taxon>
        <taxon>Enterobacterales</taxon>
        <taxon>Enterobacteriaceae</taxon>
        <taxon>Escherichia</taxon>
    </lineage>
</organism>
<proteinExistence type="inferred from homology"/>
<protein>
    <recommendedName>
        <fullName evidence="1">Na(+)/H(+) antiporter NhaA</fullName>
    </recommendedName>
    <alternativeName>
        <fullName evidence="1">Sodium/proton antiporter NhaA</fullName>
    </alternativeName>
</protein>
<comment type="function">
    <text evidence="1">Na(+)/H(+) antiporter that extrudes sodium in exchange for external protons.</text>
</comment>
<comment type="catalytic activity">
    <reaction evidence="1">
        <text>Na(+)(in) + 2 H(+)(out) = Na(+)(out) + 2 H(+)(in)</text>
        <dbReference type="Rhea" id="RHEA:29251"/>
        <dbReference type="ChEBI" id="CHEBI:15378"/>
        <dbReference type="ChEBI" id="CHEBI:29101"/>
    </reaction>
    <physiologicalReaction direction="left-to-right" evidence="1">
        <dbReference type="Rhea" id="RHEA:29252"/>
    </physiologicalReaction>
</comment>
<comment type="subcellular location">
    <subcellularLocation>
        <location evidence="1">Cell inner membrane</location>
        <topology evidence="1">Multi-pass membrane protein</topology>
    </subcellularLocation>
</comment>
<comment type="similarity">
    <text evidence="1">Belongs to the NhaA Na(+)/H(+) (TC 2.A.33) antiporter family.</text>
</comment>
<accession>A7ZHA6</accession>
<dbReference type="EMBL" id="CP000800">
    <property type="protein sequence ID" value="ABV17136.1"/>
    <property type="molecule type" value="Genomic_DNA"/>
</dbReference>
<dbReference type="RefSeq" id="WP_000681360.1">
    <property type="nucleotide sequence ID" value="NC_009801.1"/>
</dbReference>
<dbReference type="SMR" id="A7ZHA6"/>
<dbReference type="KEGG" id="ecw:EcE24377A_0016"/>
<dbReference type="HOGENOM" id="CLU_015803_1_0_6"/>
<dbReference type="Proteomes" id="UP000001122">
    <property type="component" value="Chromosome"/>
</dbReference>
<dbReference type="GO" id="GO:0005886">
    <property type="term" value="C:plasma membrane"/>
    <property type="evidence" value="ECO:0007669"/>
    <property type="project" value="UniProtKB-SubCell"/>
</dbReference>
<dbReference type="GO" id="GO:0015385">
    <property type="term" value="F:sodium:proton antiporter activity"/>
    <property type="evidence" value="ECO:0007669"/>
    <property type="project" value="TreeGrafter"/>
</dbReference>
<dbReference type="GO" id="GO:0006885">
    <property type="term" value="P:regulation of pH"/>
    <property type="evidence" value="ECO:0007669"/>
    <property type="project" value="InterPro"/>
</dbReference>
<dbReference type="FunFam" id="1.20.1530.10:FF:000001">
    <property type="entry name" value="Na(+)/H(+) antiporter NhaA"/>
    <property type="match status" value="1"/>
</dbReference>
<dbReference type="Gene3D" id="1.20.1530.10">
    <property type="entry name" value="Na+/H+ antiporter like domain"/>
    <property type="match status" value="1"/>
</dbReference>
<dbReference type="HAMAP" id="MF_01844">
    <property type="entry name" value="NhaA"/>
    <property type="match status" value="1"/>
</dbReference>
<dbReference type="InterPro" id="IPR023171">
    <property type="entry name" value="Na/H_antiporter_dom_sf"/>
</dbReference>
<dbReference type="InterPro" id="IPR004670">
    <property type="entry name" value="NhaA"/>
</dbReference>
<dbReference type="NCBIfam" id="TIGR00773">
    <property type="entry name" value="NhaA"/>
    <property type="match status" value="1"/>
</dbReference>
<dbReference type="NCBIfam" id="NF007111">
    <property type="entry name" value="PRK09560.1"/>
    <property type="match status" value="1"/>
</dbReference>
<dbReference type="NCBIfam" id="NF007112">
    <property type="entry name" value="PRK09561.1"/>
    <property type="match status" value="1"/>
</dbReference>
<dbReference type="PANTHER" id="PTHR30341:SF0">
    <property type="entry name" value="NA(+)_H(+) ANTIPORTER NHAA"/>
    <property type="match status" value="1"/>
</dbReference>
<dbReference type="PANTHER" id="PTHR30341">
    <property type="entry name" value="SODIUM ION/PROTON ANTIPORTER NHAA-RELATED"/>
    <property type="match status" value="1"/>
</dbReference>
<dbReference type="Pfam" id="PF06965">
    <property type="entry name" value="Na_H_antiport_1"/>
    <property type="match status" value="1"/>
</dbReference>
<name>NHAA_ECO24</name>
<reference key="1">
    <citation type="journal article" date="2008" name="J. Bacteriol.">
        <title>The pangenome structure of Escherichia coli: comparative genomic analysis of E. coli commensal and pathogenic isolates.</title>
        <authorList>
            <person name="Rasko D.A."/>
            <person name="Rosovitz M.J."/>
            <person name="Myers G.S.A."/>
            <person name="Mongodin E.F."/>
            <person name="Fricke W.F."/>
            <person name="Gajer P."/>
            <person name="Crabtree J."/>
            <person name="Sebaihia M."/>
            <person name="Thomson N.R."/>
            <person name="Chaudhuri R."/>
            <person name="Henderson I.R."/>
            <person name="Sperandio V."/>
            <person name="Ravel J."/>
        </authorList>
    </citation>
    <scope>NUCLEOTIDE SEQUENCE [LARGE SCALE GENOMIC DNA]</scope>
    <source>
        <strain>E24377A / ETEC</strain>
    </source>
</reference>
<keyword id="KW-0050">Antiport</keyword>
<keyword id="KW-0997">Cell inner membrane</keyword>
<keyword id="KW-1003">Cell membrane</keyword>
<keyword id="KW-0406">Ion transport</keyword>
<keyword id="KW-0472">Membrane</keyword>
<keyword id="KW-1185">Reference proteome</keyword>
<keyword id="KW-0915">Sodium</keyword>
<keyword id="KW-0739">Sodium transport</keyword>
<keyword id="KW-0812">Transmembrane</keyword>
<keyword id="KW-1133">Transmembrane helix</keyword>
<keyword id="KW-0813">Transport</keyword>
<evidence type="ECO:0000255" key="1">
    <source>
        <dbReference type="HAMAP-Rule" id="MF_01844"/>
    </source>
</evidence>
<gene>
    <name evidence="1" type="primary">nhaA</name>
    <name type="ordered locus">EcE24377A_0016</name>
</gene>
<sequence>MKHLHRFFSSDASGGIILIIAAILAMIMANSGATSGWYHDFLETPVQLRVGSLEINKNMLLWINDALMAVFFLLVGLEVKRELMQGSLASLRQAAFPVIAAIGGMIVPALLYLAFNYADPITREGWAIPAATDIAFALGVLALLGSRVPLALKIFLMALAIIDDLGAIIIIALFYTNDLSMASLGVAAVAIAVLAVLNLCGVRRTGVYILVGVVLWTAVLKSGVHATLAGVIVGFFIPLKEKHGRSPAKRLEHVLHPWVAYLILPLFAFANAGVSLQGVTLDGLTSILPLGIIAGLLIGKPLGISLFCWLALRLKLAHLPEGTTYQQIMAVGILCGIGFTMSIFIASLAFGSVDPELINWAKLGILVGSISSAVIGYSWLRVRLRPSV</sequence>